<proteinExistence type="inferred from homology"/>
<organism>
    <name type="scientific">Chlorobaculum parvum (strain DSM 263 / NCIMB 8327)</name>
    <name type="common">Chlorobium vibrioforme subsp. thiosulfatophilum</name>
    <dbReference type="NCBI Taxonomy" id="517417"/>
    <lineage>
        <taxon>Bacteria</taxon>
        <taxon>Pseudomonadati</taxon>
        <taxon>Chlorobiota</taxon>
        <taxon>Chlorobiia</taxon>
        <taxon>Chlorobiales</taxon>
        <taxon>Chlorobiaceae</taxon>
        <taxon>Chlorobaculum</taxon>
    </lineage>
</organism>
<protein>
    <recommendedName>
        <fullName evidence="1">4-hydroxy-tetrahydrodipicolinate reductase</fullName>
        <shortName evidence="1">HTPA reductase</shortName>
        <ecNumber evidence="1">1.17.1.8</ecNumber>
    </recommendedName>
</protein>
<sequence>MKVTLVGNGRMGQQIAGIVNASDANVIHKVLDVSDAVTPEVFEGSDAIIDFTVRDAFLANYKAMIASGVPVVVGTTGWDELMPQIAEEVNAAGSSMLYSANFSLGVNVFFRTLREAARLIAPFEQFDIALSEQHHTGKADFPSGTAIKAAQEVLNNNPRKRTIVRELEDGKKLQSDELQVSSIRLGTVFGVHSAIIDSESDTIELTHTAKNRTGFASGAVRAAEWLAQQHAAKPGFYTMDDFLNDLFSA</sequence>
<gene>
    <name evidence="1" type="primary">dapB</name>
    <name type="ordered locus">Cpar_0353</name>
</gene>
<evidence type="ECO:0000255" key="1">
    <source>
        <dbReference type="HAMAP-Rule" id="MF_00102"/>
    </source>
</evidence>
<evidence type="ECO:0000305" key="2"/>
<reference key="1">
    <citation type="submission" date="2008-06" db="EMBL/GenBank/DDBJ databases">
        <title>Complete sequence of Chlorobaculum parvum NCIB 8327.</title>
        <authorList>
            <consortium name="US DOE Joint Genome Institute"/>
            <person name="Lucas S."/>
            <person name="Copeland A."/>
            <person name="Lapidus A."/>
            <person name="Glavina del Rio T."/>
            <person name="Dalin E."/>
            <person name="Tice H."/>
            <person name="Bruce D."/>
            <person name="Goodwin L."/>
            <person name="Pitluck S."/>
            <person name="Schmutz J."/>
            <person name="Larimer F."/>
            <person name="Land M."/>
            <person name="Hauser L."/>
            <person name="Kyrpides N."/>
            <person name="Mikhailova N."/>
            <person name="Zhao F."/>
            <person name="Li T."/>
            <person name="Liu Z."/>
            <person name="Overmann J."/>
            <person name="Bryant D.A."/>
            <person name="Richardson P."/>
        </authorList>
    </citation>
    <scope>NUCLEOTIDE SEQUENCE [LARGE SCALE GENOMIC DNA]</scope>
    <source>
        <strain>DSM 263 / NCIMB 8327</strain>
    </source>
</reference>
<keyword id="KW-0028">Amino-acid biosynthesis</keyword>
<keyword id="KW-0963">Cytoplasm</keyword>
<keyword id="KW-0220">Diaminopimelate biosynthesis</keyword>
<keyword id="KW-0457">Lysine biosynthesis</keyword>
<keyword id="KW-0520">NAD</keyword>
<keyword id="KW-0521">NADP</keyword>
<keyword id="KW-0560">Oxidoreductase</keyword>
<name>DAPB_CHLP8</name>
<accession>B3QKY9</accession>
<dbReference type="EC" id="1.17.1.8" evidence="1"/>
<dbReference type="EMBL" id="CP001099">
    <property type="protein sequence ID" value="ACF10777.1"/>
    <property type="molecule type" value="Genomic_DNA"/>
</dbReference>
<dbReference type="RefSeq" id="WP_012501610.1">
    <property type="nucleotide sequence ID" value="NC_011027.1"/>
</dbReference>
<dbReference type="SMR" id="B3QKY9"/>
<dbReference type="STRING" id="517417.Cpar_0353"/>
<dbReference type="KEGG" id="cpc:Cpar_0353"/>
<dbReference type="eggNOG" id="COG0289">
    <property type="taxonomic scope" value="Bacteria"/>
</dbReference>
<dbReference type="HOGENOM" id="CLU_047479_1_0_10"/>
<dbReference type="OrthoDB" id="9790352at2"/>
<dbReference type="UniPathway" id="UPA00034">
    <property type="reaction ID" value="UER00018"/>
</dbReference>
<dbReference type="Proteomes" id="UP000008811">
    <property type="component" value="Chromosome"/>
</dbReference>
<dbReference type="GO" id="GO:0005829">
    <property type="term" value="C:cytosol"/>
    <property type="evidence" value="ECO:0007669"/>
    <property type="project" value="TreeGrafter"/>
</dbReference>
<dbReference type="GO" id="GO:0008839">
    <property type="term" value="F:4-hydroxy-tetrahydrodipicolinate reductase"/>
    <property type="evidence" value="ECO:0007669"/>
    <property type="project" value="UniProtKB-EC"/>
</dbReference>
<dbReference type="GO" id="GO:0051287">
    <property type="term" value="F:NAD binding"/>
    <property type="evidence" value="ECO:0007669"/>
    <property type="project" value="UniProtKB-UniRule"/>
</dbReference>
<dbReference type="GO" id="GO:0050661">
    <property type="term" value="F:NADP binding"/>
    <property type="evidence" value="ECO:0007669"/>
    <property type="project" value="UniProtKB-UniRule"/>
</dbReference>
<dbReference type="GO" id="GO:0016726">
    <property type="term" value="F:oxidoreductase activity, acting on CH or CH2 groups, NAD or NADP as acceptor"/>
    <property type="evidence" value="ECO:0007669"/>
    <property type="project" value="UniProtKB-UniRule"/>
</dbReference>
<dbReference type="GO" id="GO:0019877">
    <property type="term" value="P:diaminopimelate biosynthetic process"/>
    <property type="evidence" value="ECO:0007669"/>
    <property type="project" value="UniProtKB-UniRule"/>
</dbReference>
<dbReference type="GO" id="GO:0009089">
    <property type="term" value="P:lysine biosynthetic process via diaminopimelate"/>
    <property type="evidence" value="ECO:0007669"/>
    <property type="project" value="UniProtKB-UniRule"/>
</dbReference>
<dbReference type="Gene3D" id="3.30.360.10">
    <property type="entry name" value="Dihydrodipicolinate Reductase, domain 2"/>
    <property type="match status" value="1"/>
</dbReference>
<dbReference type="Gene3D" id="3.40.50.720">
    <property type="entry name" value="NAD(P)-binding Rossmann-like Domain"/>
    <property type="match status" value="1"/>
</dbReference>
<dbReference type="HAMAP" id="MF_00102">
    <property type="entry name" value="DapB"/>
    <property type="match status" value="1"/>
</dbReference>
<dbReference type="InterPro" id="IPR022663">
    <property type="entry name" value="DapB_C"/>
</dbReference>
<dbReference type="InterPro" id="IPR000846">
    <property type="entry name" value="DapB_N"/>
</dbReference>
<dbReference type="InterPro" id="IPR023940">
    <property type="entry name" value="DHDPR_bac"/>
</dbReference>
<dbReference type="InterPro" id="IPR036291">
    <property type="entry name" value="NAD(P)-bd_dom_sf"/>
</dbReference>
<dbReference type="NCBIfam" id="TIGR00036">
    <property type="entry name" value="dapB"/>
    <property type="match status" value="1"/>
</dbReference>
<dbReference type="PANTHER" id="PTHR20836:SF0">
    <property type="entry name" value="4-HYDROXY-TETRAHYDRODIPICOLINATE REDUCTASE 1, CHLOROPLASTIC-RELATED"/>
    <property type="match status" value="1"/>
</dbReference>
<dbReference type="PANTHER" id="PTHR20836">
    <property type="entry name" value="DIHYDRODIPICOLINATE REDUCTASE"/>
    <property type="match status" value="1"/>
</dbReference>
<dbReference type="Pfam" id="PF05173">
    <property type="entry name" value="DapB_C"/>
    <property type="match status" value="1"/>
</dbReference>
<dbReference type="Pfam" id="PF01113">
    <property type="entry name" value="DapB_N"/>
    <property type="match status" value="1"/>
</dbReference>
<dbReference type="PIRSF" id="PIRSF000161">
    <property type="entry name" value="DHPR"/>
    <property type="match status" value="1"/>
</dbReference>
<dbReference type="SUPFAM" id="SSF55347">
    <property type="entry name" value="Glyceraldehyde-3-phosphate dehydrogenase-like, C-terminal domain"/>
    <property type="match status" value="1"/>
</dbReference>
<dbReference type="SUPFAM" id="SSF51735">
    <property type="entry name" value="NAD(P)-binding Rossmann-fold domains"/>
    <property type="match status" value="1"/>
</dbReference>
<comment type="function">
    <text evidence="1">Catalyzes the conversion of 4-hydroxy-tetrahydrodipicolinate (HTPA) to tetrahydrodipicolinate.</text>
</comment>
<comment type="catalytic activity">
    <reaction evidence="1">
        <text>(S)-2,3,4,5-tetrahydrodipicolinate + NAD(+) + H2O = (2S,4S)-4-hydroxy-2,3,4,5-tetrahydrodipicolinate + NADH + H(+)</text>
        <dbReference type="Rhea" id="RHEA:35323"/>
        <dbReference type="ChEBI" id="CHEBI:15377"/>
        <dbReference type="ChEBI" id="CHEBI:15378"/>
        <dbReference type="ChEBI" id="CHEBI:16845"/>
        <dbReference type="ChEBI" id="CHEBI:57540"/>
        <dbReference type="ChEBI" id="CHEBI:57945"/>
        <dbReference type="ChEBI" id="CHEBI:67139"/>
        <dbReference type="EC" id="1.17.1.8"/>
    </reaction>
</comment>
<comment type="catalytic activity">
    <reaction evidence="1">
        <text>(S)-2,3,4,5-tetrahydrodipicolinate + NADP(+) + H2O = (2S,4S)-4-hydroxy-2,3,4,5-tetrahydrodipicolinate + NADPH + H(+)</text>
        <dbReference type="Rhea" id="RHEA:35331"/>
        <dbReference type="ChEBI" id="CHEBI:15377"/>
        <dbReference type="ChEBI" id="CHEBI:15378"/>
        <dbReference type="ChEBI" id="CHEBI:16845"/>
        <dbReference type="ChEBI" id="CHEBI:57783"/>
        <dbReference type="ChEBI" id="CHEBI:58349"/>
        <dbReference type="ChEBI" id="CHEBI:67139"/>
        <dbReference type="EC" id="1.17.1.8"/>
    </reaction>
</comment>
<comment type="pathway">
    <text evidence="1">Amino-acid biosynthesis; L-lysine biosynthesis via DAP pathway; (S)-tetrahydrodipicolinate from L-aspartate: step 4/4.</text>
</comment>
<comment type="subcellular location">
    <subcellularLocation>
        <location evidence="1">Cytoplasm</location>
    </subcellularLocation>
</comment>
<comment type="similarity">
    <text evidence="1">Belongs to the DapB family.</text>
</comment>
<comment type="caution">
    <text evidence="2">Was originally thought to be a dihydrodipicolinate reductase (DHDPR), catalyzing the conversion of dihydrodipicolinate to tetrahydrodipicolinate. However, it was shown in E.coli that the substrate of the enzymatic reaction is not dihydrodipicolinate (DHDP) but in fact (2S,4S)-4-hydroxy-2,3,4,5-tetrahydrodipicolinic acid (HTPA), the product released by the DapA-catalyzed reaction.</text>
</comment>
<feature type="chain" id="PRO_1000093953" description="4-hydroxy-tetrahydrodipicolinate reductase">
    <location>
        <begin position="1"/>
        <end position="249"/>
    </location>
</feature>
<feature type="active site" description="Proton donor/acceptor" evidence="1">
    <location>
        <position position="134"/>
    </location>
</feature>
<feature type="active site" description="Proton donor" evidence="1">
    <location>
        <position position="138"/>
    </location>
</feature>
<feature type="binding site" evidence="1">
    <location>
        <position position="32"/>
    </location>
    <ligand>
        <name>NAD(+)</name>
        <dbReference type="ChEBI" id="CHEBI:57540"/>
    </ligand>
</feature>
<feature type="binding site" evidence="1">
    <location>
        <begin position="74"/>
        <end position="76"/>
    </location>
    <ligand>
        <name>NAD(+)</name>
        <dbReference type="ChEBI" id="CHEBI:57540"/>
    </ligand>
</feature>
<feature type="binding site" evidence="1">
    <location>
        <begin position="99"/>
        <end position="102"/>
    </location>
    <ligand>
        <name>NAD(+)</name>
        <dbReference type="ChEBI" id="CHEBI:57540"/>
    </ligand>
</feature>
<feature type="binding site" evidence="1">
    <location>
        <position position="135"/>
    </location>
    <ligand>
        <name>(S)-2,3,4,5-tetrahydrodipicolinate</name>
        <dbReference type="ChEBI" id="CHEBI:16845"/>
    </ligand>
</feature>
<feature type="binding site" evidence="1">
    <location>
        <begin position="144"/>
        <end position="145"/>
    </location>
    <ligand>
        <name>(S)-2,3,4,5-tetrahydrodipicolinate</name>
        <dbReference type="ChEBI" id="CHEBI:16845"/>
    </ligand>
</feature>